<evidence type="ECO:0000250" key="1"/>
<evidence type="ECO:0000250" key="2">
    <source>
        <dbReference type="UniProtKB" id="P0DP23"/>
    </source>
</evidence>
<evidence type="ECO:0000250" key="3">
    <source>
        <dbReference type="UniProtKB" id="P0DP26"/>
    </source>
</evidence>
<evidence type="ECO:0000250" key="4">
    <source>
        <dbReference type="UniProtKB" id="P0DP29"/>
    </source>
</evidence>
<evidence type="ECO:0000250" key="5">
    <source>
        <dbReference type="UniProtKB" id="P62158"/>
    </source>
</evidence>
<evidence type="ECO:0000250" key="6">
    <source>
        <dbReference type="UniProtKB" id="P62204"/>
    </source>
</evidence>
<evidence type="ECO:0000255" key="7">
    <source>
        <dbReference type="PROSITE-ProRule" id="PRU00448"/>
    </source>
</evidence>
<evidence type="ECO:0000269" key="8">
    <source>
    </source>
</evidence>
<evidence type="ECO:0000269" key="9">
    <source>
    </source>
</evidence>
<evidence type="ECO:0000269" key="10">
    <source>
    </source>
</evidence>
<evidence type="ECO:0000269" key="11">
    <source>
    </source>
</evidence>
<evidence type="ECO:0000269" key="12">
    <source>
    </source>
</evidence>
<evidence type="ECO:0000269" key="13">
    <source ref="3"/>
</evidence>
<evidence type="ECO:0000269" key="14">
    <source ref="4"/>
</evidence>
<evidence type="ECO:0000269" key="15">
    <source ref="9"/>
</evidence>
<evidence type="ECO:0000305" key="16"/>
<evidence type="ECO:0007829" key="17">
    <source>
        <dbReference type="PDB" id="1CM4"/>
    </source>
</evidence>
<evidence type="ECO:0007829" key="18">
    <source>
        <dbReference type="PDB" id="1QIW"/>
    </source>
</evidence>
<evidence type="ECO:0007829" key="19">
    <source>
        <dbReference type="PDB" id="3IF7"/>
    </source>
</evidence>
<gene>
    <name type="primary">CALM</name>
    <name type="synonym">CAM</name>
</gene>
<proteinExistence type="evidence at protein level"/>
<feature type="initiator methionine" description="Removed" evidence="10 12 13 14">
    <location>
        <position position="1"/>
    </location>
</feature>
<feature type="chain" id="PRO_0000198222" description="Calmodulin">
    <location>
        <begin position="2"/>
        <end position="149"/>
    </location>
</feature>
<feature type="domain" description="EF-hand 1" evidence="7">
    <location>
        <begin position="8"/>
        <end position="43"/>
    </location>
</feature>
<feature type="domain" description="EF-hand 2" evidence="7">
    <location>
        <begin position="44"/>
        <end position="79"/>
    </location>
</feature>
<feature type="domain" description="EF-hand 3" evidence="7">
    <location>
        <begin position="81"/>
        <end position="116"/>
    </location>
</feature>
<feature type="domain" description="EF-hand 4" evidence="7">
    <location>
        <begin position="117"/>
        <end position="149"/>
    </location>
</feature>
<feature type="binding site" evidence="7">
    <location>
        <position position="21"/>
    </location>
    <ligand>
        <name>Ca(2+)</name>
        <dbReference type="ChEBI" id="CHEBI:29108"/>
        <label>1</label>
    </ligand>
</feature>
<feature type="binding site" evidence="7">
    <location>
        <position position="23"/>
    </location>
    <ligand>
        <name>Ca(2+)</name>
        <dbReference type="ChEBI" id="CHEBI:29108"/>
        <label>1</label>
    </ligand>
</feature>
<feature type="binding site" evidence="7">
    <location>
        <position position="25"/>
    </location>
    <ligand>
        <name>Ca(2+)</name>
        <dbReference type="ChEBI" id="CHEBI:29108"/>
        <label>1</label>
    </ligand>
</feature>
<feature type="binding site" evidence="7">
    <location>
        <position position="27"/>
    </location>
    <ligand>
        <name>Ca(2+)</name>
        <dbReference type="ChEBI" id="CHEBI:29108"/>
        <label>1</label>
    </ligand>
</feature>
<feature type="binding site" evidence="7">
    <location>
        <position position="32"/>
    </location>
    <ligand>
        <name>Ca(2+)</name>
        <dbReference type="ChEBI" id="CHEBI:29108"/>
        <label>1</label>
    </ligand>
</feature>
<feature type="binding site" evidence="7">
    <location>
        <position position="57"/>
    </location>
    <ligand>
        <name>Ca(2+)</name>
        <dbReference type="ChEBI" id="CHEBI:29108"/>
        <label>2</label>
    </ligand>
</feature>
<feature type="binding site" evidence="7">
    <location>
        <position position="59"/>
    </location>
    <ligand>
        <name>Ca(2+)</name>
        <dbReference type="ChEBI" id="CHEBI:29108"/>
        <label>2</label>
    </ligand>
</feature>
<feature type="binding site" evidence="7">
    <location>
        <position position="61"/>
    </location>
    <ligand>
        <name>Ca(2+)</name>
        <dbReference type="ChEBI" id="CHEBI:29108"/>
        <label>2</label>
    </ligand>
</feature>
<feature type="binding site" evidence="7">
    <location>
        <position position="63"/>
    </location>
    <ligand>
        <name>Ca(2+)</name>
        <dbReference type="ChEBI" id="CHEBI:29108"/>
        <label>2</label>
    </ligand>
</feature>
<feature type="binding site" evidence="7">
    <location>
        <position position="68"/>
    </location>
    <ligand>
        <name>Ca(2+)</name>
        <dbReference type="ChEBI" id="CHEBI:29108"/>
        <label>2</label>
    </ligand>
</feature>
<feature type="binding site" evidence="7">
    <location>
        <position position="94"/>
    </location>
    <ligand>
        <name>Ca(2+)</name>
        <dbReference type="ChEBI" id="CHEBI:29108"/>
        <label>3</label>
    </ligand>
</feature>
<feature type="binding site" evidence="7">
    <location>
        <position position="96"/>
    </location>
    <ligand>
        <name>Ca(2+)</name>
        <dbReference type="ChEBI" id="CHEBI:29108"/>
        <label>3</label>
    </ligand>
</feature>
<feature type="binding site" evidence="7">
    <location>
        <position position="98"/>
    </location>
    <ligand>
        <name>Ca(2+)</name>
        <dbReference type="ChEBI" id="CHEBI:29108"/>
        <label>3</label>
    </ligand>
</feature>
<feature type="binding site" evidence="7">
    <location>
        <position position="100"/>
    </location>
    <ligand>
        <name>Ca(2+)</name>
        <dbReference type="ChEBI" id="CHEBI:29108"/>
        <label>3</label>
    </ligand>
</feature>
<feature type="binding site" evidence="7">
    <location>
        <position position="105"/>
    </location>
    <ligand>
        <name>Ca(2+)</name>
        <dbReference type="ChEBI" id="CHEBI:29108"/>
        <label>3</label>
    </ligand>
</feature>
<feature type="binding site" evidence="7">
    <location>
        <position position="130"/>
    </location>
    <ligand>
        <name>Ca(2+)</name>
        <dbReference type="ChEBI" id="CHEBI:29108"/>
        <label>4</label>
    </ligand>
</feature>
<feature type="binding site" evidence="7">
    <location>
        <position position="132"/>
    </location>
    <ligand>
        <name>Ca(2+)</name>
        <dbReference type="ChEBI" id="CHEBI:29108"/>
        <label>4</label>
    </ligand>
</feature>
<feature type="binding site" evidence="7">
    <location>
        <position position="134"/>
    </location>
    <ligand>
        <name>Ca(2+)</name>
        <dbReference type="ChEBI" id="CHEBI:29108"/>
        <label>4</label>
    </ligand>
</feature>
<feature type="binding site" evidence="7">
    <location>
        <position position="136"/>
    </location>
    <ligand>
        <name>Ca(2+)</name>
        <dbReference type="ChEBI" id="CHEBI:29108"/>
        <label>4</label>
    </ligand>
</feature>
<feature type="binding site" evidence="7">
    <location>
        <position position="141"/>
    </location>
    <ligand>
        <name>Ca(2+)</name>
        <dbReference type="ChEBI" id="CHEBI:29108"/>
        <label>4</label>
    </ligand>
</feature>
<feature type="modified residue" description="N-acetylalanine" evidence="10">
    <location>
        <position position="2"/>
    </location>
</feature>
<feature type="modified residue" description="N6-acetyllysine; alternate" evidence="2">
    <location>
        <position position="22"/>
    </location>
</feature>
<feature type="modified residue" description="Phosphothreonine; by CaMK4" evidence="4">
    <location>
        <position position="45"/>
    </location>
</feature>
<feature type="modified residue" description="Phosphoserine" evidence="2">
    <location>
        <position position="82"/>
    </location>
</feature>
<feature type="modified residue" description="N6-acetyllysine" evidence="2">
    <location>
        <position position="95"/>
    </location>
</feature>
<feature type="modified residue" description="Phosphotyrosine" evidence="2">
    <location>
        <position position="100"/>
    </location>
</feature>
<feature type="modified residue" description="Phosphoserine" evidence="2">
    <location>
        <position position="102"/>
    </location>
</feature>
<feature type="modified residue" description="Phosphothreonine" evidence="2">
    <location>
        <position position="111"/>
    </location>
</feature>
<feature type="modified residue" description="N6,N6,N6-trimethyllysine; alternate" evidence="10 15">
    <location>
        <position position="116"/>
    </location>
</feature>
<feature type="modified residue" description="N6-methyllysine; alternate" evidence="2">
    <location>
        <position position="116"/>
    </location>
</feature>
<feature type="modified residue" description="Phosphotyrosine" evidence="2">
    <location>
        <position position="139"/>
    </location>
</feature>
<feature type="cross-link" description="Glycyl lysine isopeptide (Lys-Gly) (interchain with G-Cter in SUMO2); alternate" evidence="2">
    <location>
        <position position="22"/>
    </location>
</feature>
<feature type="cross-link" description="Glycyl lysine isopeptide (Lys-Gly) (interchain with G-Cter in ubiquitin); alternate" evidence="12">
    <location>
        <position position="22"/>
    </location>
</feature>
<feature type="helix" evidence="19">
    <location>
        <begin position="7"/>
        <end position="20"/>
    </location>
</feature>
<feature type="turn" evidence="17">
    <location>
        <begin position="21"/>
        <end position="23"/>
    </location>
</feature>
<feature type="strand" evidence="19">
    <location>
        <begin position="25"/>
        <end position="28"/>
    </location>
</feature>
<feature type="helix" evidence="19">
    <location>
        <begin position="30"/>
        <end position="39"/>
    </location>
</feature>
<feature type="helix" evidence="19">
    <location>
        <begin position="46"/>
        <end position="56"/>
    </location>
</feature>
<feature type="strand" evidence="19">
    <location>
        <begin position="61"/>
        <end position="65"/>
    </location>
</feature>
<feature type="helix" evidence="19">
    <location>
        <begin position="66"/>
        <end position="75"/>
    </location>
</feature>
<feature type="strand" evidence="18">
    <location>
        <begin position="79"/>
        <end position="82"/>
    </location>
</feature>
<feature type="helix" evidence="19">
    <location>
        <begin position="83"/>
        <end position="93"/>
    </location>
</feature>
<feature type="strand" evidence="19">
    <location>
        <begin position="98"/>
        <end position="101"/>
    </location>
</feature>
<feature type="helix" evidence="19">
    <location>
        <begin position="103"/>
        <end position="112"/>
    </location>
</feature>
<feature type="helix" evidence="19">
    <location>
        <begin position="119"/>
        <end position="129"/>
    </location>
</feature>
<feature type="strand" evidence="19">
    <location>
        <begin position="131"/>
        <end position="138"/>
    </location>
</feature>
<feature type="helix" evidence="19">
    <location>
        <begin position="139"/>
        <end position="146"/>
    </location>
</feature>
<protein>
    <recommendedName>
        <fullName>Calmodulin</fullName>
        <shortName>CaM</shortName>
    </recommendedName>
</protein>
<organism>
    <name type="scientific">Bos taurus</name>
    <name type="common">Bovine</name>
    <dbReference type="NCBI Taxonomy" id="9913"/>
    <lineage>
        <taxon>Eukaryota</taxon>
        <taxon>Metazoa</taxon>
        <taxon>Chordata</taxon>
        <taxon>Craniata</taxon>
        <taxon>Vertebrata</taxon>
        <taxon>Euteleostomi</taxon>
        <taxon>Mammalia</taxon>
        <taxon>Eutheria</taxon>
        <taxon>Laurasiatheria</taxon>
        <taxon>Artiodactyla</taxon>
        <taxon>Ruminantia</taxon>
        <taxon>Pecora</taxon>
        <taxon>Bovidae</taxon>
        <taxon>Bovinae</taxon>
        <taxon>Bos</taxon>
    </lineage>
</organism>
<name>CALM_BOVIN</name>
<comment type="function">
    <text evidence="2">Calmodulin acts as part of a calcium signal transduction pathway by mediating the control of a large number of enzymes, ion channels, aquaporins and other proteins through calcium-binding. Calcium-binding is required for the activation of calmodulin. Among the enzymes to be stimulated by the calmodulin-calcium complex are a number of protein kinases, such as myosin light-chain kinases and calmodulin-dependent protein kinase type II (CaMK2), and phosphatases. Together with CCP110 and centrin, is involved in a genetic pathway that regulates the centrosome cycle and progression through cytokinesis. Is a regulator of voltage-dependent L-type calcium channels. Mediates calcium-dependent inactivation of CACNA1C. Positively regulates calcium-activated potassium channel activity of KCNN2. Forms a potassium channel complex with KCNQ1 and regulates electrophysiological activity of the channel via calcium-binding. Acts as a sensor to modulate the endoplasmic reticulum contacts with other organelles mediated by VMP1:ATP2A2.</text>
</comment>
<comment type="subunit">
    <text evidence="2 3 4 5 6 8 9 11">Homotetramer (By similarity). Interacts with CEP97, CCP110, TTN/titin and SRY. Interacts with MYO5A and RRAD (By similarity). Interacts with USP6; the interaction is calcium dependent (By similarity). Interacts with CDK5RAP2. Interacts with SCN5A. Interacts with RYR1 and RYR2 (By similarity). Interacts with FCHO1. Interacts with MIP in a 1:2 stoichiometry; the interaction with the cytoplasmic domains from two MIP subunits promotes MIP water channel closure. Interacts with ORAI1; this may play a role in the regulation of ORAI1-mediated calcium transport. Interacts with SYT7 (By similarity). Interacts with MYO10 and MYO1C (PubMed:11457842, PubMed:8022785). Interacts with SLC9A1 in a calcium-dependent manner (By similarity). Interacts with HINT1; interaction increases in the presence of calcium ions (By similarity). Interacts with HINT3 (By similarity). Interacts with SLC26A5 (via STAS domain); this interaction is calcium-dependent and the STAS domain interacts with only one lobe of CALM which is an elongated conformation (By similarity). Ca(2+)-bound CALM1 binds CNGA1:CNGB1 channel (via CaM1 and CaM2 regions); this interaction modulates the affinity of the channel for cNMPs in response to intracellular Ca(2+) levels. Interacts with KCNN4; this interaction allows channel opening (By similarity). Interacts with KCNN2; this interaction regulates the channel activity through calcium-binding (By similarity).</text>
</comment>
<comment type="interaction">
    <interactant intactId="EBI-397403">
        <id>P62157</id>
    </interactant>
    <interactant intactId="EBI-980643">
        <id>Q9LF79</id>
        <label>ACA8</label>
    </interactant>
    <organismsDiffer>true</organismsDiffer>
    <experiments>14</experiments>
</comment>
<comment type="interaction">
    <interactant intactId="EBI-397403">
        <id>P62157</id>
    </interactant>
    <interactant intactId="EBI-4439046">
        <id>Q8L517</id>
        <label>At4g30490</label>
    </interactant>
    <organismsDiffer>true</organismsDiffer>
    <experiments>4</experiments>
</comment>
<comment type="interaction">
    <interactant intactId="EBI-397403">
        <id>P62157</id>
    </interactant>
    <interactant intactId="EBI-970191">
        <id>Q14451</id>
        <label>GRB7</label>
    </interactant>
    <organismsDiffer>true</organismsDiffer>
    <experiments>2</experiments>
</comment>
<comment type="interaction">
    <interactant intactId="EBI-397403">
        <id>P62157</id>
    </interactant>
    <interactant intactId="EBI-2910092">
        <id>P23711</id>
        <label>Hmox2</label>
    </interactant>
    <organismsDiffer>true</organismsDiffer>
    <experiments>3</experiments>
</comment>
<comment type="interaction">
    <interactant intactId="EBI-397403">
        <id>P62157</id>
    </interactant>
    <interactant intactId="EBI-1058602">
        <id>P02788</id>
        <label>LTF</label>
    </interactant>
    <organismsDiffer>true</organismsDiffer>
    <experiments>2</experiments>
</comment>
<comment type="interaction">
    <interactant intactId="EBI-397403">
        <id>P62157</id>
    </interactant>
    <interactant intactId="EBI-349460">
        <id>P29476</id>
        <label>Nos1</label>
    </interactant>
    <organismsDiffer>true</organismsDiffer>
    <experiments>2</experiments>
</comment>
<comment type="interaction">
    <interactant intactId="EBI-397403">
        <id>P62157</id>
    </interactant>
    <interactant intactId="EBI-7052018">
        <id>Q62600</id>
        <label>Nos3</label>
    </interactant>
    <organismsDiffer>true</organismsDiffer>
    <experiments>2</experiments>
</comment>
<comment type="interaction">
    <interactant intactId="EBI-397403">
        <id>P62157</id>
    </interactant>
    <interactant intactId="EBI-7305642">
        <id>Q96PH1-4</id>
        <label>NOX5</label>
    </interactant>
    <organismsDiffer>true</organismsDiffer>
    <experiments>3</experiments>
</comment>
<comment type="interaction">
    <interactant intactId="EBI-397403">
        <id>P62157</id>
    </interactant>
    <interactant intactId="EBI-3920028">
        <id>P48436</id>
        <label>SOX9</label>
    </interactant>
    <organismsDiffer>true</organismsDiffer>
    <experiments>7</experiments>
</comment>
<comment type="interaction">
    <interactant intactId="EBI-397403">
        <id>P62157</id>
    </interactant>
    <interactant intactId="EBI-448878">
        <id>Q13586</id>
        <label>STIM1</label>
    </interactant>
    <organismsDiffer>true</organismsDiffer>
    <experiments>2</experiments>
</comment>
<comment type="subcellular location">
    <subcellularLocation>
        <location>Cytoplasm</location>
    </subcellularLocation>
    <subcellularLocation>
        <location>Cytoplasm</location>
        <location>Cytoskeleton</location>
        <location>Spindle</location>
    </subcellularLocation>
    <subcellularLocation>
        <location>Cytoplasm</location>
        <location>Cytoskeleton</location>
        <location>Spindle pole</location>
    </subcellularLocation>
    <text evidence="1">Distributed throughout the cell during interphase, but during mitosis becomes dramatically localized to the spindle poles and the spindle microtubules.</text>
</comment>
<comment type="domain">
    <text evidence="2">The N-terminal and C-terminal lobes of CALM bind to the C-terminus of KCNQ1 in a clamp-like conformation. Binding of CALM C-terminus to KCNQ1 is calcium-independent but is essential for assembly of the structure. Binding of CALM N-terminus to KCNQ1 is calcium-dependent and regulates electrophysiological activity of the channel. The C-lobe interacts with KCNN4 channels in a calcium-independent manner, whereas the N-lobe interacts with the S4-S5 linker of KCNN4 in a calcium-dependent manner playing a role as calcium sensor and gating the channel.</text>
</comment>
<comment type="PTM">
    <text evidence="12">Ubiquitination results in a strongly decreased activity.</text>
</comment>
<comment type="PTM">
    <text evidence="1">Phosphorylation results in a decreased activity.</text>
</comment>
<comment type="miscellaneous">
    <text>This protein has four functional calcium-binding sites.</text>
</comment>
<comment type="similarity">
    <text evidence="16">Belongs to the calmodulin family.</text>
</comment>
<accession>P62157</accession>
<accession>P02593</accession>
<accession>P70667</accession>
<accession>P99014</accession>
<accession>Q08D84</accession>
<accession>Q2KJE6</accession>
<accession>Q61379</accession>
<accession>Q61380</accession>
<keyword id="KW-0002">3D-structure</keyword>
<keyword id="KW-0007">Acetylation</keyword>
<keyword id="KW-0106">Calcium</keyword>
<keyword id="KW-0963">Cytoplasm</keyword>
<keyword id="KW-0206">Cytoskeleton</keyword>
<keyword id="KW-0903">Direct protein sequencing</keyword>
<keyword id="KW-1017">Isopeptide bond</keyword>
<keyword id="KW-0479">Metal-binding</keyword>
<keyword id="KW-0488">Methylation</keyword>
<keyword id="KW-0597">Phosphoprotein</keyword>
<keyword id="KW-1185">Reference proteome</keyword>
<keyword id="KW-0677">Repeat</keyword>
<keyword id="KW-0832">Ubl conjugation</keyword>
<dbReference type="EMBL" id="AB099053">
    <property type="protein sequence ID" value="BAC56543.1"/>
    <property type="molecule type" value="mRNA"/>
</dbReference>
<dbReference type="EMBL" id="BC105380">
    <property type="protein sequence ID" value="AAI05381.1"/>
    <property type="molecule type" value="mRNA"/>
</dbReference>
<dbReference type="EMBL" id="BC120080">
    <property type="protein sequence ID" value="AAI20081.1"/>
    <property type="molecule type" value="mRNA"/>
</dbReference>
<dbReference type="EMBL" id="BC123890">
    <property type="protein sequence ID" value="AAI23891.1"/>
    <property type="molecule type" value="mRNA"/>
</dbReference>
<dbReference type="PIR" id="A90719">
    <property type="entry name" value="MCBO"/>
</dbReference>
<dbReference type="PDB" id="1A29">
    <property type="method" value="X-ray"/>
    <property type="resolution" value="2.74 A"/>
    <property type="chains" value="A=2-149"/>
</dbReference>
<dbReference type="PDB" id="1AK8">
    <property type="method" value="NMR"/>
    <property type="chains" value="A=1-76"/>
</dbReference>
<dbReference type="PDB" id="1CDM">
    <property type="method" value="X-ray"/>
    <property type="resolution" value="2.00 A"/>
    <property type="chains" value="A=5-148"/>
</dbReference>
<dbReference type="PDB" id="1CM1">
    <property type="method" value="X-ray"/>
    <property type="resolution" value="2.00 A"/>
    <property type="chains" value="A=2-149"/>
</dbReference>
<dbReference type="PDB" id="1CM4">
    <property type="method" value="X-ray"/>
    <property type="resolution" value="2.00 A"/>
    <property type="chains" value="A=2-149"/>
</dbReference>
<dbReference type="PDB" id="1CMF">
    <property type="method" value="NMR"/>
    <property type="chains" value="A=77-149"/>
</dbReference>
<dbReference type="PDB" id="1CMG">
    <property type="method" value="NMR"/>
    <property type="chains" value="A=77-149"/>
</dbReference>
<dbReference type="PDB" id="1DEG">
    <property type="method" value="X-ray"/>
    <property type="resolution" value="2.90 A"/>
    <property type="chains" value="A=6-148"/>
</dbReference>
<dbReference type="PDB" id="1FW4">
    <property type="method" value="X-ray"/>
    <property type="resolution" value="1.70 A"/>
    <property type="chains" value="A=79-149"/>
</dbReference>
<dbReference type="PDB" id="1LIN">
    <property type="method" value="X-ray"/>
    <property type="resolution" value="2.00 A"/>
    <property type="chains" value="A=2-149"/>
</dbReference>
<dbReference type="PDB" id="1PRW">
    <property type="method" value="X-ray"/>
    <property type="resolution" value="1.70 A"/>
    <property type="chains" value="A=2-149"/>
</dbReference>
<dbReference type="PDB" id="1QIV">
    <property type="method" value="X-ray"/>
    <property type="resolution" value="2.64 A"/>
    <property type="chains" value="A=2-149"/>
</dbReference>
<dbReference type="PDB" id="1QIW">
    <property type="method" value="X-ray"/>
    <property type="resolution" value="2.30 A"/>
    <property type="chains" value="A/B=2-149"/>
</dbReference>
<dbReference type="PDB" id="1XA5">
    <property type="method" value="X-ray"/>
    <property type="resolution" value="2.12 A"/>
    <property type="chains" value="A=2-149"/>
</dbReference>
<dbReference type="PDB" id="2F2O">
    <property type="method" value="X-ray"/>
    <property type="resolution" value="2.17 A"/>
    <property type="chains" value="A/B=1-149"/>
</dbReference>
<dbReference type="PDB" id="2F2P">
    <property type="method" value="X-ray"/>
    <property type="resolution" value="2.60 A"/>
    <property type="chains" value="A/B=1-149"/>
</dbReference>
<dbReference type="PDB" id="2FOT">
    <property type="method" value="X-ray"/>
    <property type="resolution" value="2.45 A"/>
    <property type="chains" value="A=2-149"/>
</dbReference>
<dbReference type="PDB" id="3IF7">
    <property type="method" value="X-ray"/>
    <property type="resolution" value="1.60 A"/>
    <property type="chains" value="A=2-149"/>
</dbReference>
<dbReference type="PDB" id="6O20">
    <property type="method" value="EM"/>
    <property type="resolution" value="3.30 A"/>
    <property type="chains" value="F=1-149"/>
</dbReference>
<dbReference type="PDBsum" id="1A29"/>
<dbReference type="PDBsum" id="1AK8"/>
<dbReference type="PDBsum" id="1CDM"/>
<dbReference type="PDBsum" id="1CM1"/>
<dbReference type="PDBsum" id="1CM4"/>
<dbReference type="PDBsum" id="1CMF"/>
<dbReference type="PDBsum" id="1CMG"/>
<dbReference type="PDBsum" id="1DEG"/>
<dbReference type="PDBsum" id="1FW4"/>
<dbReference type="PDBsum" id="1LIN"/>
<dbReference type="PDBsum" id="1PRW"/>
<dbReference type="PDBsum" id="1QIV"/>
<dbReference type="PDBsum" id="1QIW"/>
<dbReference type="PDBsum" id="1XA5"/>
<dbReference type="PDBsum" id="2F2O"/>
<dbReference type="PDBsum" id="2F2P"/>
<dbReference type="PDBsum" id="2FOT"/>
<dbReference type="PDBsum" id="3IF7"/>
<dbReference type="PDBsum" id="6O20"/>
<dbReference type="EMDB" id="EMD-0607"/>
<dbReference type="EMDB" id="EMD-16249"/>
<dbReference type="PCDDB" id="P62157"/>
<dbReference type="SMR" id="P62157"/>
<dbReference type="BioGRID" id="176895">
    <property type="interactions" value="1"/>
</dbReference>
<dbReference type="BioGRID" id="544691">
    <property type="interactions" value="9"/>
</dbReference>
<dbReference type="CORUM" id="P62157"/>
<dbReference type="DIP" id="DIP-36674N"/>
<dbReference type="ELM" id="P62157"/>
<dbReference type="FunCoup" id="P62157">
    <property type="interactions" value="4022"/>
</dbReference>
<dbReference type="IntAct" id="P62157">
    <property type="interactions" value="107"/>
</dbReference>
<dbReference type="MINT" id="P62157"/>
<dbReference type="STRING" id="9913.ENSBTAP00000074130"/>
<dbReference type="BindingDB" id="P62157"/>
<dbReference type="ChEMBL" id="CHEMBL6092"/>
<dbReference type="DrugCentral" id="P62157"/>
<dbReference type="iPTMnet" id="P62157"/>
<dbReference type="MetOSite" id="P62157"/>
<dbReference type="PaxDb" id="9913-ENSBTAP00000019411"/>
<dbReference type="PeptideAtlas" id="P62157"/>
<dbReference type="Ensembl" id="ENSBTAT00000019411.5">
    <property type="protein sequence ID" value="ENSBTAP00000019411.5"/>
    <property type="gene ID" value="ENSBTAG00000014583.5"/>
</dbReference>
<dbReference type="Ensembl" id="ENSBTAT00000036194.6">
    <property type="protein sequence ID" value="ENSBTAP00000036057.6"/>
    <property type="gene ID" value="ENSBTAG00000025644.6"/>
</dbReference>
<dbReference type="KEGG" id="bta:100297344"/>
<dbReference type="KEGG" id="bta:520277"/>
<dbReference type="KEGG" id="bta:617095"/>
<dbReference type="CTD" id="801"/>
<dbReference type="CTD" id="805"/>
<dbReference type="CTD" id="808"/>
<dbReference type="VEuPathDB" id="HostDB:ENSBTAG00000001575"/>
<dbReference type="VEuPathDB" id="HostDB:ENSBTAG00000014583"/>
<dbReference type="VEuPathDB" id="HostDB:ENSBTAG00000025644"/>
<dbReference type="eggNOG" id="KOG0027">
    <property type="taxonomic scope" value="Eukaryota"/>
</dbReference>
<dbReference type="GeneTree" id="ENSGT00950000182980"/>
<dbReference type="HOGENOM" id="CLU_061288_2_0_1"/>
<dbReference type="InParanoid" id="P62157"/>
<dbReference type="OMA" id="DEMIREP"/>
<dbReference type="OrthoDB" id="9695450at2759"/>
<dbReference type="TreeFam" id="TF300912"/>
<dbReference type="EvolutionaryTrace" id="P62157"/>
<dbReference type="PRO" id="PR:P62157"/>
<dbReference type="Proteomes" id="UP000009136">
    <property type="component" value="Chromosome 10"/>
</dbReference>
<dbReference type="Proteomes" id="UP000009136">
    <property type="component" value="Chromosome 18"/>
</dbReference>
<dbReference type="Bgee" id="ENSBTAG00000001575">
    <property type="expression patterns" value="Expressed in oocyte and 105 other cell types or tissues"/>
</dbReference>
<dbReference type="GO" id="GO:0005813">
    <property type="term" value="C:centrosome"/>
    <property type="evidence" value="ECO:0000318"/>
    <property type="project" value="GO_Central"/>
</dbReference>
<dbReference type="GO" id="GO:0005737">
    <property type="term" value="C:cytoplasm"/>
    <property type="evidence" value="ECO:0000314"/>
    <property type="project" value="CAFA"/>
</dbReference>
<dbReference type="GO" id="GO:0005829">
    <property type="term" value="C:cytosol"/>
    <property type="evidence" value="ECO:0000304"/>
    <property type="project" value="Reactome"/>
</dbReference>
<dbReference type="GO" id="GO:0043209">
    <property type="term" value="C:myelin sheath"/>
    <property type="evidence" value="ECO:0000318"/>
    <property type="project" value="GO_Central"/>
</dbReference>
<dbReference type="GO" id="GO:0032991">
    <property type="term" value="C:protein-containing complex"/>
    <property type="evidence" value="ECO:0000314"/>
    <property type="project" value="CAFA"/>
</dbReference>
<dbReference type="GO" id="GO:0000922">
    <property type="term" value="C:spindle pole"/>
    <property type="evidence" value="ECO:0007669"/>
    <property type="project" value="UniProtKB-SubCell"/>
</dbReference>
<dbReference type="GO" id="GO:0005509">
    <property type="term" value="F:calcium ion binding"/>
    <property type="evidence" value="ECO:0000314"/>
    <property type="project" value="CAFA"/>
</dbReference>
<dbReference type="GO" id="GO:0019904">
    <property type="term" value="F:protein domain specific binding"/>
    <property type="evidence" value="ECO:0000353"/>
    <property type="project" value="CAFA"/>
</dbReference>
<dbReference type="GO" id="GO:0010880">
    <property type="term" value="P:regulation of release of sequestered calcium ion into cytosol by sarcoplasmic reticulum"/>
    <property type="evidence" value="ECO:0000314"/>
    <property type="project" value="BHF-UCL"/>
</dbReference>
<dbReference type="CDD" id="cd00051">
    <property type="entry name" value="EFh"/>
    <property type="match status" value="2"/>
</dbReference>
<dbReference type="FunFam" id="1.10.238.10:FF:000527">
    <property type="entry name" value="Calmodulin-3"/>
    <property type="match status" value="1"/>
</dbReference>
<dbReference type="Gene3D" id="1.10.238.10">
    <property type="entry name" value="EF-hand"/>
    <property type="match status" value="3"/>
</dbReference>
<dbReference type="InterPro" id="IPR050230">
    <property type="entry name" value="CALM/Myosin/TropC-like"/>
</dbReference>
<dbReference type="InterPro" id="IPR011992">
    <property type="entry name" value="EF-hand-dom_pair"/>
</dbReference>
<dbReference type="InterPro" id="IPR018247">
    <property type="entry name" value="EF_Hand_1_Ca_BS"/>
</dbReference>
<dbReference type="InterPro" id="IPR002048">
    <property type="entry name" value="EF_hand_dom"/>
</dbReference>
<dbReference type="PANTHER" id="PTHR23048:SF0">
    <property type="entry name" value="CALMODULIN LIKE 3"/>
    <property type="match status" value="1"/>
</dbReference>
<dbReference type="PANTHER" id="PTHR23048">
    <property type="entry name" value="MYOSIN LIGHT CHAIN 1, 3"/>
    <property type="match status" value="1"/>
</dbReference>
<dbReference type="Pfam" id="PF13499">
    <property type="entry name" value="EF-hand_7"/>
    <property type="match status" value="2"/>
</dbReference>
<dbReference type="PRINTS" id="PR00450">
    <property type="entry name" value="RECOVERIN"/>
</dbReference>
<dbReference type="SMART" id="SM00054">
    <property type="entry name" value="EFh"/>
    <property type="match status" value="4"/>
</dbReference>
<dbReference type="SUPFAM" id="SSF47473">
    <property type="entry name" value="EF-hand"/>
    <property type="match status" value="1"/>
</dbReference>
<dbReference type="PROSITE" id="PS00018">
    <property type="entry name" value="EF_HAND_1"/>
    <property type="match status" value="4"/>
</dbReference>
<dbReference type="PROSITE" id="PS50222">
    <property type="entry name" value="EF_HAND_2"/>
    <property type="match status" value="4"/>
</dbReference>
<sequence>MADQLTEEQIAEFKEAFSLFDKDGDGTITTKELGTVMRSLGQNPTEAELQDMINEVDADGNGTIDFPEFLTMMARKMKDTDSEEEIREAFRVFDKDGNGYISAAELRHVMTNLGEKLTDEEVDEMIREADIDGDGQVNYEEFVQMMTAK</sequence>
<reference key="1">
    <citation type="journal article" date="2003" name="Mol. Reprod. Dev.">
        <title>Characterization of gene expression profiles in early bovine pregnancy using a custom cDNA microarray.</title>
        <authorList>
            <person name="Ishiwata H."/>
            <person name="Katsuma S."/>
            <person name="Kizaki K."/>
            <person name="Patel O.V."/>
            <person name="Nakano H."/>
            <person name="Takahashi T."/>
            <person name="Imai K."/>
            <person name="Hirasawa A."/>
            <person name="Shiojima S."/>
            <person name="Ikawa H."/>
            <person name="Suzuki Y."/>
            <person name="Tsujimoto G."/>
            <person name="Izaike Y."/>
            <person name="Todoroki J."/>
            <person name="Hashizume K."/>
        </authorList>
    </citation>
    <scope>NUCLEOTIDE SEQUENCE [MRNA]</scope>
</reference>
<reference key="2">
    <citation type="submission" date="2006-08" db="EMBL/GenBank/DDBJ databases">
        <authorList>
            <consortium name="NIH - Mammalian Gene Collection (MGC) project"/>
        </authorList>
    </citation>
    <scope>NUCLEOTIDE SEQUENCE [LARGE SCALE MRNA]</scope>
    <source>
        <strain>Crossbred X Angus</strain>
        <strain>Hereford</strain>
        <tissue>Fetal pons</tissue>
        <tissue>Ileum</tissue>
        <tissue>Uterus</tissue>
    </source>
</reference>
<reference key="3">
    <citation type="journal article" date="1978" name="FEBS Lett.">
        <title>The amino acid sequence of the troponin C-like protein (modulator protein) from bovine uterus.</title>
        <authorList>
            <person name="Grand R.J.A."/>
            <person name="Perry S.V."/>
        </authorList>
    </citation>
    <scope>PROTEIN SEQUENCE OF 2-149</scope>
    <source>
        <tissue>Uterus</tissue>
    </source>
</reference>
<reference key="4">
    <citation type="journal article" date="1980" name="Biomed. Res.">
        <title>Determination of the complete amino acid sequence of calmodulin (phenylalanine-rich acidic protein II) from bovine brain.</title>
        <authorList>
            <person name="Kasai H."/>
            <person name="Kato Y."/>
            <person name="Isobe T."/>
            <person name="Kawasaki H."/>
            <person name="Okuyama T."/>
        </authorList>
    </citation>
    <scope>PROTEIN SEQUENCE OF 2-149</scope>
    <source>
        <tissue>Brain</tissue>
    </source>
</reference>
<reference key="5">
    <citation type="journal article" date="1980" name="J. Biol. Chem.">
        <title>The complete amino acid sequence of the Ca2+-dependent modulator protein (calmodulin) of bovine brain.</title>
        <authorList>
            <person name="Watterson D.M."/>
            <person name="Sharief F."/>
            <person name="Vanaman T.C."/>
        </authorList>
    </citation>
    <scope>PROTEIN SEQUENCE OF 2-149</scope>
    <scope>ACETYLATION AT ALA-2</scope>
    <scope>METHYLATION AT LYS-116</scope>
    <source>
        <tissue>Brain</tissue>
    </source>
</reference>
<reference key="6">
    <citation type="journal article" date="1998" name="Eur. J. Biochem.">
        <title>Modulation of calmodulin function by ubiquitin-calmodulin ligase and identification of the responsible ubiquitylation site in vertebrate calmodulin.</title>
        <authorList>
            <person name="Laub M."/>
            <person name="Steppuhn J.A."/>
            <person name="Blueggel M."/>
            <person name="Immler D."/>
            <person name="Meyer H.E."/>
            <person name="Jennissen H.P."/>
        </authorList>
    </citation>
    <scope>PROTEIN SEQUENCE OF 2-28</scope>
    <scope>UBIQUITINATION AT LYS-22</scope>
</reference>
<reference key="7">
    <citation type="journal article" date="1988" name="Eur. J. Biochem.">
        <title>Heat-resistant inhibitors of protein kinase C from bovine brain.</title>
        <authorList>
            <person name="Pribilla I."/>
            <person name="Krueger H."/>
            <person name="Buchner K."/>
            <person name="Otto H."/>
            <person name="Schiebler W."/>
            <person name="Tripier D."/>
            <person name="Hucho F."/>
        </authorList>
    </citation>
    <scope>RETRACTED PAPER</scope>
</reference>
<reference key="8">
    <citation type="journal article" date="1990" name="Eur. J. Biochem.">
        <authorList>
            <person name="Pribilla I."/>
            <person name="Krueger H."/>
            <person name="Buchner K."/>
            <person name="Otto H."/>
            <person name="Schiebler W."/>
            <person name="Tripier D."/>
            <person name="Hucho F."/>
        </authorList>
    </citation>
    <scope>RETRACTION NOTICE OF PUBMED:3058479</scope>
</reference>
<reference key="9">
    <citation type="unpublished observations" date="2002-10">
        <authorList>
            <person name="Weise C."/>
        </authorList>
    </citation>
    <scope>METHYLATION AT LYS-116</scope>
</reference>
<reference key="10">
    <citation type="journal article" date="1994" name="Proc. Natl. Acad. Sci. U.S.A.">
        <title>Domain Structure of a mammalian myosin I-beta.</title>
        <authorList>
            <person name="Reizes O."/>
            <person name="Barylko B."/>
            <person name="Li C."/>
            <person name="Suedhof T.C."/>
            <person name="Albenisi J.P."/>
        </authorList>
    </citation>
    <scope>INTERACTION WITH MYO1C</scope>
</reference>
<reference key="11">
    <citation type="journal article" date="2001" name="J. Biol. Chem.">
        <title>Motor function and regulation of myosin X.</title>
        <authorList>
            <person name="Homma K."/>
            <person name="Saito J."/>
            <person name="Ikebe R."/>
            <person name="Ikebe M."/>
        </authorList>
    </citation>
    <scope>INTERACTION WITH MYO10</scope>
</reference>
<reference key="12">
    <citation type="journal article" date="2023" name="Proc. Natl. Acad. Sci. U.S.A.">
        <title>Structural basis of calmodulin modulation of the rod cyclic nucleotide-gated channel.</title>
        <authorList>
            <person name="Barret D.C.A."/>
            <person name="Schuster D."/>
            <person name="Rodrigues M.J."/>
            <person name="Leitner A."/>
            <person name="Picotti P."/>
            <person name="Schertler G.F.X."/>
            <person name="Kaupp U.B."/>
            <person name="Korkhov V.M."/>
            <person name="Marino J."/>
        </authorList>
    </citation>
    <scope>SUBUNIT</scope>
</reference>
<reference key="13">
    <citation type="journal article" date="1988" name="Proteins">
        <title>Two trifluoperazine-binding sites on calmodulin predicted from comparative molecular modeling with troponin-C.</title>
        <authorList>
            <person name="Strynadka N.C.J."/>
            <person name="James M.N.G."/>
        </authorList>
    </citation>
    <scope>3D-STRUCTURE MODELING OF TRIMETHYLATED CALMODULIN</scope>
</reference>
<reference key="14">
    <citation type="journal article" date="1997" name="Biochemistry">
        <title>Solution structure of the paramagnetic complex of the N-terminal domain of calmodulin with two Ce3+ ions by 1H NMR.</title>
        <authorList>
            <person name="Bentrop D."/>
            <person name="Bertini I."/>
            <person name="Cremonini M.A."/>
            <person name="Forsen S."/>
            <person name="Luchinat C."/>
            <person name="Malmendal A."/>
        </authorList>
    </citation>
    <scope>STRUCTURE BY NMR OF 1-75</scope>
</reference>
<reference key="15">
    <citation type="journal article" date="1993" name="FEBS Lett.">
        <title>The structure of apo-calmodulin. A 1H NMR examination of the carboxy-terminal domain.</title>
        <authorList>
            <person name="Finn B.E."/>
            <person name="Drakenberg T."/>
            <person name="Forsen S."/>
        </authorList>
    </citation>
    <scope>STRUCTURE BY NMR OF 77-149</scope>
</reference>
<reference key="16">
    <citation type="journal article" date="1992" name="Science">
        <title>Target enzyme recognition by calmodulin: 2.4 A structure of a calmodulin-peptide complex.</title>
        <authorList>
            <person name="Meador W.E."/>
            <person name="Means A.R."/>
            <person name="Quiocho F.A."/>
        </authorList>
    </citation>
    <scope>X-RAY CRYSTALLOGRAPHY (2.2 ANGSTROMS)</scope>
</reference>
<reference key="17">
    <citation type="journal article" date="1993" name="Science">
        <title>Modulation of calmodulin plasticity in molecular recognition on the basis of X-ray structures.</title>
        <authorList>
            <person name="Meador W.E."/>
            <person name="Means A.R."/>
            <person name="Quiocho F.A."/>
        </authorList>
    </citation>
    <scope>X-RAY CRYSTALLOGRAPHY (2.0 ANGSTROMS) OF 5-148</scope>
</reference>
<reference key="18">
    <citation type="journal article" date="1993" name="Proc. Natl. Acad. Sci. U.S.A.">
        <title>The linker of des-Glu84-calmodulin is bent.</title>
        <authorList>
            <person name="Raghunathan S."/>
            <person name="Chandross R.J."/>
            <person name="Cheng B.P."/>
            <person name="Persechini A."/>
            <person name="Sobottka S.E."/>
            <person name="Kretsinger R.H."/>
        </authorList>
    </citation>
    <scope>X-RAY CRYSTALLOGRAPHY (2.9 ANGSTROMS) OF 6-148 GLU-85 DEL</scope>
</reference>
<reference key="19">
    <citation type="journal article" date="1994" name="Biochemistry">
        <title>Drug binding by calmodulin: crystal structure of a calmodulin-trifluoperazine complex.</title>
        <authorList>
            <person name="Cook W.J."/>
            <person name="Walter L.J."/>
            <person name="Walter M.R."/>
        </authorList>
    </citation>
    <scope>X-RAY CRYSTALLOGRAPHY (2.45 ANGSTROMS)</scope>
</reference>
<reference key="20">
    <citation type="journal article" date="1994" name="Nat. Struct. Biol.">
        <title>Trifluoperazine-induced conformational change in Ca(2+)-calmodulin.</title>
        <authorList>
            <person name="Vandonselaar M."/>
            <person name="Hickie R.A."/>
            <person name="Quail J.W."/>
            <person name="Delbaere L.T."/>
        </authorList>
    </citation>
    <scope>X-RAY CRYSTALLOGRAPHY (2.0 ANGSTROMS) OF 4-149</scope>
</reference>
<reference key="21">
    <citation type="journal article" date="1997" name="Structure">
        <title>Motions of calmodulin characterized using both Bragg and diffuse X-ray scattering.</title>
        <authorList>
            <person name="Wall M.E."/>
            <person name="Clarage J.B."/>
            <person name="Phillips G.N."/>
        </authorList>
    </citation>
    <scope>X-RAY CRYSTALLOGRAPHY (2.0 ANGSTROMS) OF 5-147</scope>
</reference>
<reference key="22">
    <citation type="journal article" date="2001" name="Acta Crystallogr. D">
        <title>Structure of Escherichia coli fragment TR2C from calmodulin to 1.7 A resolution.</title>
        <authorList>
            <person name="Olsson L.L."/>
            <person name="Sjolin L."/>
        </authorList>
    </citation>
    <scope>X-RAY CRYSTALLOGRAPHY (1.7 ANGSTROMS) OF 79-149</scope>
</reference>